<organism>
    <name type="scientific">Conus neocostatus</name>
    <name type="common">Cone snail</name>
    <name type="synonym">Asprella neocostatus</name>
    <dbReference type="NCBI Taxonomy" id="2840447"/>
    <lineage>
        <taxon>Eukaryota</taxon>
        <taxon>Metazoa</taxon>
        <taxon>Spiralia</taxon>
        <taxon>Lophotrochozoa</taxon>
        <taxon>Mollusca</taxon>
        <taxon>Gastropoda</taxon>
        <taxon>Caenogastropoda</taxon>
        <taxon>Neogastropoda</taxon>
        <taxon>Conoidea</taxon>
        <taxon>Conidae</taxon>
        <taxon>Conus</taxon>
    </lineage>
</organism>
<accession>P0DW19</accession>
<reference key="1">
    <citation type="journal article" date="2022" name="Sci. Adv.">
        <title>Somatostatin venom analogs evolved by fish-hunting cone snails: from prey capture behavior to identifying drug leads.</title>
        <authorList>
            <person name="Ramiro I.B.L."/>
            <person name="Bjoern-Yoshimoto W.E."/>
            <person name="Imperial J.S."/>
            <person name="Gajewiak J."/>
            <person name="Salcedo P.F."/>
            <person name="Watkins M."/>
            <person name="Taylor D."/>
            <person name="Resager W."/>
            <person name="Ueberheide B."/>
            <person name="Braeuner-Osborne H."/>
            <person name="Whitby F.G."/>
            <person name="Hill C.P."/>
            <person name="Martin L.F."/>
            <person name="Patwardhan A."/>
            <person name="Concepcion G.P."/>
            <person name="Olivera B.M."/>
            <person name="Safavi-Hemami H."/>
        </authorList>
    </citation>
    <scope>NUCLEOTIDE SEQUENCE [MRNA]</scope>
    <scope>PROBABLE GAMMA-CARBOXYGLUTAMATION AT GLU-61</scope>
    <scope>PROBABLE D-AMINO ACID AT TRP-64</scope>
    <scope>PROBABLE HYDROXYLATION AT PRO-70</scope>
    <source>
        <tissue>Venom duct</tissue>
    </source>
</reference>
<keyword id="KW-0165">Cleavage on pair of basic residues</keyword>
<keyword id="KW-0208">D-amino acid</keyword>
<keyword id="KW-1015">Disulfide bond</keyword>
<keyword id="KW-1213">G-protein coupled receptor impairing toxin</keyword>
<keyword id="KW-0301">Gamma-carboxyglutamic acid</keyword>
<keyword id="KW-0379">Hydroxylation</keyword>
<keyword id="KW-0964">Secreted</keyword>
<keyword id="KW-0732">Signal</keyword>
<keyword id="KW-0800">Toxin</keyword>
<sequence length="78" mass="9018">MQTAYWVMVMVMVWITAPLSEGGKPNDVIRGLVPDDLTPQLILRSLISRRRSDKDVGKRMECYWKSCSRPLSRRHDLG</sequence>
<feature type="signal peptide" evidence="2">
    <location>
        <begin position="1"/>
        <end position="22"/>
    </location>
</feature>
<feature type="propeptide" id="PRO_0000456117" evidence="5">
    <location>
        <begin position="23"/>
        <end position="59"/>
    </location>
</feature>
<feature type="peptide" id="PRO_0000456118" description="Consomatin Nc1" evidence="5">
    <location>
        <begin position="60"/>
        <end position="70"/>
    </location>
</feature>
<feature type="propeptide" id="PRO_0000456119" evidence="5">
    <location>
        <begin position="71"/>
        <end position="78"/>
    </location>
</feature>
<feature type="modified residue" description="4-carboxyglutamate" evidence="5">
    <location>
        <position position="61"/>
    </location>
</feature>
<feature type="modified residue" description="D-tryptophan" evidence="1 5">
    <location>
        <position position="64"/>
    </location>
</feature>
<feature type="modified residue" description="4-hydroxyproline" evidence="1 5">
    <location>
        <position position="70"/>
    </location>
</feature>
<feature type="disulfide bond" evidence="1 5">
    <location>
        <begin position="62"/>
        <end position="67"/>
    </location>
</feature>
<evidence type="ECO:0000250" key="1">
    <source>
        <dbReference type="UniProtKB" id="P0DQT5"/>
    </source>
</evidence>
<evidence type="ECO:0000255" key="2"/>
<evidence type="ECO:0000303" key="3">
    <source>
    </source>
</evidence>
<evidence type="ECO:0000305" key="4"/>
<evidence type="ECO:0000305" key="5">
    <source>
    </source>
</evidence>
<protein>
    <recommendedName>
        <fullName evidence="3">Consomatin Nc1</fullName>
        <shortName evidence="3">ConSST Nc1</shortName>
    </recommendedName>
    <alternativeName>
        <fullName evidence="1">Somatostatin-related peptide</fullName>
        <shortName evidence="1">SSRP</shortName>
    </alternativeName>
</protein>
<dbReference type="GO" id="GO:0005576">
    <property type="term" value="C:extracellular region"/>
    <property type="evidence" value="ECO:0007669"/>
    <property type="project" value="UniProtKB-SubCell"/>
</dbReference>
<dbReference type="GO" id="GO:0090729">
    <property type="term" value="F:toxin activity"/>
    <property type="evidence" value="ECO:0007669"/>
    <property type="project" value="UniProtKB-KW"/>
</dbReference>
<name>CSST1_CONNO</name>
<proteinExistence type="evidence at protein level"/>
<comment type="function">
    <text evidence="1">Moderately activates human somatostatin receptors (SSTR) with a preferential activation of SSTR1 and SSTR4. In vivo, does not cause behavioral changes in mice within a few minutes of intracranial injection, but causes a progressive loss of movement thereafter. Four to five hours after injection, mice recover, even with the highest dose tested. Shows antinociception and antihyperalgesia activities in two mouse models of acute pain, most probably by acting outside the central nervous system.</text>
</comment>
<comment type="subcellular location">
    <subcellularLocation>
        <location evidence="5">Secreted</location>
    </subcellularLocation>
</comment>
<comment type="tissue specificity">
    <text evidence="5">Expressed by the venom duct.</text>
</comment>
<comment type="domain">
    <text evidence="4">The cysteine framework is C-C.</text>
</comment>
<comment type="miscellaneous">
    <text evidence="1">This peptide is an evolutionarily optimized stable analog of somatostatin. In addition, it adopts nearly identical conformations as in the somatostatin drug analog Octreotide. As this drug, it contains a D-Trp at the same position, whose synthesis is a common strategy used for enhancing the metabolic stability of compounds in drug design.</text>
</comment>
<comment type="miscellaneous">
    <text evidence="1">Consomatins evolved by gene duplication of a 'Somatostatin and related peptides (SSRP)' gene expressed in the snail neuroendocrine system.</text>
</comment>
<comment type="miscellaneous">
    <text evidence="1">Negative results: does not activate any of the other 313 GPCRs tested. Shows little or no activating activity at the SSTR2, SSTR3 and SSTR5.</text>
</comment>
<comment type="similarity">
    <text evidence="4">Belongs to the conotoxin C superfamily. Consomatin family.</text>
</comment>